<reference key="1">
    <citation type="submission" date="2007-06" db="EMBL/GenBank/DDBJ databases">
        <title>Complete sequence of Methanococcus vannielii SB.</title>
        <authorList>
            <consortium name="US DOE Joint Genome Institute"/>
            <person name="Copeland A."/>
            <person name="Lucas S."/>
            <person name="Lapidus A."/>
            <person name="Barry K."/>
            <person name="Glavina del Rio T."/>
            <person name="Dalin E."/>
            <person name="Tice H."/>
            <person name="Pitluck S."/>
            <person name="Chain P."/>
            <person name="Malfatti S."/>
            <person name="Shin M."/>
            <person name="Vergez L."/>
            <person name="Schmutz J."/>
            <person name="Larimer F."/>
            <person name="Land M."/>
            <person name="Hauser L."/>
            <person name="Kyrpides N."/>
            <person name="Anderson I."/>
            <person name="Sieprawska-Lupa M."/>
            <person name="Whitman W.B."/>
            <person name="Richardson P."/>
        </authorList>
    </citation>
    <scope>NUCLEOTIDE SEQUENCE [LARGE SCALE GENOMIC DNA]</scope>
    <source>
        <strain>ATCC 35089 / DSM 1224 / JCM 13029 / OCM 148 / SB</strain>
    </source>
</reference>
<dbReference type="EMBL" id="CP000742">
    <property type="protein sequence ID" value="ABR54763.1"/>
    <property type="molecule type" value="Genomic_DNA"/>
</dbReference>
<dbReference type="RefSeq" id="WP_011972664.1">
    <property type="nucleotide sequence ID" value="NC_009634.1"/>
</dbReference>
<dbReference type="SMR" id="A6UQJ1"/>
<dbReference type="STRING" id="406327.Mevan_0858"/>
<dbReference type="GeneID" id="5324918"/>
<dbReference type="KEGG" id="mvn:Mevan_0858"/>
<dbReference type="eggNOG" id="arCOG04071">
    <property type="taxonomic scope" value="Archaea"/>
</dbReference>
<dbReference type="HOGENOM" id="CLU_026535_0_0_2"/>
<dbReference type="OrthoDB" id="10737at2157"/>
<dbReference type="Proteomes" id="UP000001107">
    <property type="component" value="Chromosome"/>
</dbReference>
<dbReference type="GO" id="GO:1990904">
    <property type="term" value="C:ribonucleoprotein complex"/>
    <property type="evidence" value="ECO:0007669"/>
    <property type="project" value="UniProtKB-KW"/>
</dbReference>
<dbReference type="GO" id="GO:0005840">
    <property type="term" value="C:ribosome"/>
    <property type="evidence" value="ECO:0007669"/>
    <property type="project" value="UniProtKB-KW"/>
</dbReference>
<dbReference type="GO" id="GO:0019843">
    <property type="term" value="F:rRNA binding"/>
    <property type="evidence" value="ECO:0007669"/>
    <property type="project" value="UniProtKB-UniRule"/>
</dbReference>
<dbReference type="GO" id="GO:0003735">
    <property type="term" value="F:structural constituent of ribosome"/>
    <property type="evidence" value="ECO:0007669"/>
    <property type="project" value="InterPro"/>
</dbReference>
<dbReference type="GO" id="GO:0006412">
    <property type="term" value="P:translation"/>
    <property type="evidence" value="ECO:0007669"/>
    <property type="project" value="UniProtKB-UniRule"/>
</dbReference>
<dbReference type="Gene3D" id="3.40.1370.10">
    <property type="match status" value="1"/>
</dbReference>
<dbReference type="HAMAP" id="MF_01328_A">
    <property type="entry name" value="Ribosomal_uL4_A"/>
    <property type="match status" value="1"/>
</dbReference>
<dbReference type="InterPro" id="IPR002136">
    <property type="entry name" value="Ribosomal_uL4"/>
</dbReference>
<dbReference type="InterPro" id="IPR023574">
    <property type="entry name" value="Ribosomal_uL4_dom_sf"/>
</dbReference>
<dbReference type="InterPro" id="IPR013000">
    <property type="entry name" value="Ribosomal_uL4_euk/arc_CS"/>
</dbReference>
<dbReference type="InterPro" id="IPR045240">
    <property type="entry name" value="Ribosomal_uL4_euk/arch"/>
</dbReference>
<dbReference type="InterPro" id="IPR019970">
    <property type="entry name" value="Ribosomall_uL4-arc"/>
</dbReference>
<dbReference type="NCBIfam" id="TIGR03672">
    <property type="entry name" value="rpl4p_arch"/>
    <property type="match status" value="1"/>
</dbReference>
<dbReference type="PANTHER" id="PTHR19431">
    <property type="entry name" value="60S RIBOSOMAL PROTEIN L4"/>
    <property type="match status" value="1"/>
</dbReference>
<dbReference type="Pfam" id="PF00573">
    <property type="entry name" value="Ribosomal_L4"/>
    <property type="match status" value="1"/>
</dbReference>
<dbReference type="SUPFAM" id="SSF52166">
    <property type="entry name" value="Ribosomal protein L4"/>
    <property type="match status" value="1"/>
</dbReference>
<dbReference type="PROSITE" id="PS00939">
    <property type="entry name" value="RIBOSOMAL_L1E"/>
    <property type="match status" value="1"/>
</dbReference>
<accession>A6UQJ1</accession>
<protein>
    <recommendedName>
        <fullName evidence="1">Large ribosomal subunit protein uL4</fullName>
    </recommendedName>
    <alternativeName>
        <fullName evidence="2">50S ribosomal protein L4</fullName>
    </alternativeName>
</protein>
<keyword id="KW-0687">Ribonucleoprotein</keyword>
<keyword id="KW-0689">Ribosomal protein</keyword>
<keyword id="KW-0694">RNA-binding</keyword>
<keyword id="KW-0699">rRNA-binding</keyword>
<gene>
    <name evidence="1" type="primary">rpl4</name>
    <name type="ordered locus">Mevan_0858</name>
</gene>
<evidence type="ECO:0000255" key="1">
    <source>
        <dbReference type="HAMAP-Rule" id="MF_01328"/>
    </source>
</evidence>
<evidence type="ECO:0000305" key="2"/>
<feature type="chain" id="PRO_1000142157" description="Large ribosomal subunit protein uL4">
    <location>
        <begin position="1"/>
        <end position="252"/>
    </location>
</feature>
<sequence length="252" mass="27134">MNVKVYNLDGSEKGAIELPSVFETEYRPDVIKRAVISSLTARLQPKGSDPLAGYRTSAKSIGKGHGKARVRRTAQGAGAFVPQAVGGRRAHPPKVEKILFERINRKERLKALASAIAASANSEIVAARGHKIEGVPSLPLVVNAEFESLVKTKEVLSVFKALKLEADLERAKDGIKIKAGRAKLRGRKYKKPRSVLVVVGDACDAVAASRNLAGVDVITANDLSAIHIAPGTMAGRLTLWTENAIEKLKERF</sequence>
<comment type="function">
    <text evidence="1">One of the primary rRNA binding proteins, this protein initially binds near the 5'-end of the 23S rRNA. It is important during the early stages of 50S assembly. It makes multiple contacts with different domains of the 23S rRNA in the assembled 50S subunit and ribosome.</text>
</comment>
<comment type="function">
    <text evidence="1">Forms part of the polypeptide exit tunnel.</text>
</comment>
<comment type="subunit">
    <text evidence="1">Part of the 50S ribosomal subunit.</text>
</comment>
<comment type="similarity">
    <text evidence="1">Belongs to the universal ribosomal protein uL4 family.</text>
</comment>
<proteinExistence type="inferred from homology"/>
<name>RL4_METVS</name>
<organism>
    <name type="scientific">Methanococcus vannielii (strain ATCC 35089 / DSM 1224 / JCM 13029 / OCM 148 / SB)</name>
    <dbReference type="NCBI Taxonomy" id="406327"/>
    <lineage>
        <taxon>Archaea</taxon>
        <taxon>Methanobacteriati</taxon>
        <taxon>Methanobacteriota</taxon>
        <taxon>Methanomada group</taxon>
        <taxon>Methanococci</taxon>
        <taxon>Methanococcales</taxon>
        <taxon>Methanococcaceae</taxon>
        <taxon>Methanococcus</taxon>
    </lineage>
</organism>